<comment type="function">
    <text evidence="1">Processive glucosyltransferase involved in the biosynthesis of both the bilayer- and non-bilayer-forming membrane glucolipids. Is able to successively transfer two glucosyl residues to diacylglycerol (DAG), thereby catalyzing the formation of beta-monoglucosyl-DAG (3-O-(beta-D-glucopyranosyl)-1,2-diacyl-sn-glycerol) and beta-diglucosyl-DAG (3-O-(beta-D-glucopyranosyl-beta-(1-&gt;6)-D-glucopyranosyl)-1,2-diacyl-sn-glycerol). Beta-diglucosyl-DAG is the predominant glycolipid found in Bacillales and is also used as a membrane anchor for lipoteichoic acid (LTA).</text>
</comment>
<comment type="catalytic activity">
    <reaction>
        <text>a 1,2-diacyl-3-O-(beta-D-glucopyranosyl)-sn-glycerol + UDP-alpha-D-glucose = a 1,2-diacyl-3-O-(beta-D-Glc-(1-&gt;6)-beta-D-Glc)-sn-glycerol + UDP + H(+)</text>
        <dbReference type="Rhea" id="RHEA:39031"/>
        <dbReference type="ChEBI" id="CHEBI:15378"/>
        <dbReference type="ChEBI" id="CHEBI:58223"/>
        <dbReference type="ChEBI" id="CHEBI:58885"/>
        <dbReference type="ChEBI" id="CHEBI:75799"/>
        <dbReference type="ChEBI" id="CHEBI:76264"/>
        <dbReference type="EC" id="2.4.1.315"/>
    </reaction>
</comment>
<comment type="catalytic activity">
    <reaction evidence="1">
        <text>a 1,2-diacyl-sn-glycerol + UDP-alpha-D-glucose = a 1,2-diacyl-3-O-(beta-D-glucopyranosyl)-sn-glycerol + UDP + H(+)</text>
        <dbReference type="Rhea" id="RHEA:17285"/>
        <dbReference type="ChEBI" id="CHEBI:15378"/>
        <dbReference type="ChEBI" id="CHEBI:17815"/>
        <dbReference type="ChEBI" id="CHEBI:58223"/>
        <dbReference type="ChEBI" id="CHEBI:58885"/>
        <dbReference type="ChEBI" id="CHEBI:75799"/>
    </reaction>
</comment>
<comment type="pathway">
    <text evidence="1">Glycolipid metabolism; diglucosyl-diacylglycerol biosynthesis.</text>
</comment>
<comment type="subcellular location">
    <subcellularLocation>
        <location evidence="1">Cell membrane</location>
    </subcellularLocation>
</comment>
<comment type="similarity">
    <text evidence="1">Belongs to the glycosyltransferase 28 family. UgtP subfamily.</text>
</comment>
<protein>
    <recommendedName>
        <fullName evidence="1">Processive diacylglycerol beta-glucosyltransferase</fullName>
        <ecNumber>2.4.1.315</ecNumber>
    </recommendedName>
    <alternativeName>
        <fullName evidence="1">Beta-diglucosyldiacylglycerol synthase</fullName>
        <shortName evidence="1">Beta-DGS</shortName>
        <shortName evidence="1">DGlcDAG synthase</shortName>
        <shortName evidence="1">Glc2-DAG synthase</shortName>
    </alternativeName>
    <alternativeName>
        <fullName evidence="1">Beta-gentiobiosyldiacylglycerol synthase</fullName>
    </alternativeName>
    <alternativeName>
        <fullName evidence="1">Beta-monoglucosyldiacylglycerol synthase</fullName>
        <shortName evidence="1">Beta-MGS</shortName>
        <shortName evidence="1">MGlcDAG synthase</shortName>
    </alternativeName>
    <alternativeName>
        <fullName>Diglucosyl diacylglycerol synthase (1,6-linking)</fullName>
    </alternativeName>
    <alternativeName>
        <fullName evidence="1">Glucosyl-beta-1,6-glucosyldiacylglycerol synthase</fullName>
    </alternativeName>
    <alternativeName>
        <fullName evidence="1">UDP glucosyltransferase</fullName>
    </alternativeName>
    <alternativeName>
        <fullName evidence="1">UDP-glucose:1,2-diacylglycerol-3-beta-D-glucosyltransferase</fullName>
    </alternativeName>
</protein>
<gene>
    <name evidence="1" type="primary">ugtP</name>
    <name type="ordered locus">MW0898</name>
</gene>
<accession>Q8NXC3</accession>
<keyword id="KW-0119">Carbohydrate metabolism</keyword>
<keyword id="KW-1003">Cell membrane</keyword>
<keyword id="KW-0328">Glycosyltransferase</keyword>
<keyword id="KW-0444">Lipid biosynthesis</keyword>
<keyword id="KW-0443">Lipid metabolism</keyword>
<keyword id="KW-0472">Membrane</keyword>
<keyword id="KW-0808">Transferase</keyword>
<organism>
    <name type="scientific">Staphylococcus aureus (strain MW2)</name>
    <dbReference type="NCBI Taxonomy" id="196620"/>
    <lineage>
        <taxon>Bacteria</taxon>
        <taxon>Bacillati</taxon>
        <taxon>Bacillota</taxon>
        <taxon>Bacilli</taxon>
        <taxon>Bacillales</taxon>
        <taxon>Staphylococcaceae</taxon>
        <taxon>Staphylococcus</taxon>
    </lineage>
</organism>
<feature type="chain" id="PRO_0000308459" description="Processive diacylglycerol beta-glucosyltransferase">
    <location>
        <begin position="1"/>
        <end position="391"/>
    </location>
</feature>
<proteinExistence type="inferred from homology"/>
<dbReference type="EC" id="2.4.1.315"/>
<dbReference type="EMBL" id="BA000033">
    <property type="protein sequence ID" value="BAB94763.1"/>
    <property type="molecule type" value="Genomic_DNA"/>
</dbReference>
<dbReference type="RefSeq" id="WP_000258650.1">
    <property type="nucleotide sequence ID" value="NC_003923.1"/>
</dbReference>
<dbReference type="SMR" id="Q8NXC3"/>
<dbReference type="CAZy" id="GT28">
    <property type="family name" value="Glycosyltransferase Family 28"/>
</dbReference>
<dbReference type="DNASU" id="1003010"/>
<dbReference type="KEGG" id="sam:MW0898"/>
<dbReference type="HOGENOM" id="CLU_028367_0_1_9"/>
<dbReference type="UniPathway" id="UPA00894"/>
<dbReference type="GO" id="GO:0005886">
    <property type="term" value="C:plasma membrane"/>
    <property type="evidence" value="ECO:0007669"/>
    <property type="project" value="UniProtKB-SubCell"/>
</dbReference>
<dbReference type="GO" id="GO:0047228">
    <property type="term" value="F:1,2-diacylglycerol 3-glucosyltransferase activity"/>
    <property type="evidence" value="ECO:0007669"/>
    <property type="project" value="UniProtKB-UniRule"/>
</dbReference>
<dbReference type="GO" id="GO:0009246">
    <property type="term" value="P:enterobacterial common antigen biosynthetic process"/>
    <property type="evidence" value="ECO:0007669"/>
    <property type="project" value="UniProtKB-UniPathway"/>
</dbReference>
<dbReference type="GO" id="GO:0009247">
    <property type="term" value="P:glycolipid biosynthetic process"/>
    <property type="evidence" value="ECO:0007669"/>
    <property type="project" value="UniProtKB-UniRule"/>
</dbReference>
<dbReference type="GO" id="GO:0070395">
    <property type="term" value="P:lipoteichoic acid biosynthetic process"/>
    <property type="evidence" value="ECO:0007669"/>
    <property type="project" value="UniProtKB-UniRule"/>
</dbReference>
<dbReference type="CDD" id="cd17507">
    <property type="entry name" value="GT28_Beta-DGS-like"/>
    <property type="match status" value="1"/>
</dbReference>
<dbReference type="Gene3D" id="3.40.50.2000">
    <property type="entry name" value="Glycogen Phosphorylase B"/>
    <property type="match status" value="2"/>
</dbReference>
<dbReference type="HAMAP" id="MF_01280">
    <property type="entry name" value="Diacylglyc_glucosyltr"/>
    <property type="match status" value="1"/>
</dbReference>
<dbReference type="InterPro" id="IPR009695">
    <property type="entry name" value="Diacylglyc_glucosyltr_N"/>
</dbReference>
<dbReference type="InterPro" id="IPR007235">
    <property type="entry name" value="Glyco_trans_28_C"/>
</dbReference>
<dbReference type="InterPro" id="IPR050519">
    <property type="entry name" value="Glycosyltransf_28_UgtP"/>
</dbReference>
<dbReference type="InterPro" id="IPR023589">
    <property type="entry name" value="Pro_diacylglycrl_glcsylTrfase"/>
</dbReference>
<dbReference type="NCBIfam" id="NF010134">
    <property type="entry name" value="PRK13608.1"/>
    <property type="match status" value="1"/>
</dbReference>
<dbReference type="PANTHER" id="PTHR43025">
    <property type="entry name" value="MONOGALACTOSYLDIACYLGLYCEROL SYNTHASE"/>
    <property type="match status" value="1"/>
</dbReference>
<dbReference type="PANTHER" id="PTHR43025:SF3">
    <property type="entry name" value="MONOGALACTOSYLDIACYLGLYCEROL SYNTHASE 1, CHLOROPLASTIC"/>
    <property type="match status" value="1"/>
</dbReference>
<dbReference type="Pfam" id="PF04101">
    <property type="entry name" value="Glyco_tran_28_C"/>
    <property type="match status" value="1"/>
</dbReference>
<dbReference type="Pfam" id="PF06925">
    <property type="entry name" value="MGDG_synth"/>
    <property type="match status" value="1"/>
</dbReference>
<dbReference type="SUPFAM" id="SSF53756">
    <property type="entry name" value="UDP-Glycosyltransferase/glycogen phosphorylase"/>
    <property type="match status" value="1"/>
</dbReference>
<reference key="1">
    <citation type="journal article" date="2002" name="Lancet">
        <title>Genome and virulence determinants of high virulence community-acquired MRSA.</title>
        <authorList>
            <person name="Baba T."/>
            <person name="Takeuchi F."/>
            <person name="Kuroda M."/>
            <person name="Yuzawa H."/>
            <person name="Aoki K."/>
            <person name="Oguchi A."/>
            <person name="Nagai Y."/>
            <person name="Iwama N."/>
            <person name="Asano K."/>
            <person name="Naimi T."/>
            <person name="Kuroda H."/>
            <person name="Cui L."/>
            <person name="Yamamoto K."/>
            <person name="Hiramatsu K."/>
        </authorList>
    </citation>
    <scope>NUCLEOTIDE SEQUENCE [LARGE SCALE GENOMIC DNA]</scope>
    <source>
        <strain>MW2</strain>
    </source>
</reference>
<sequence length="391" mass="44548">MVTQNKKILIITGSFGNGHMQVTQSIVNQLNDMNLDHLSVIEHDLFMEAHPILTSICKKWYINSFKYFRNMYKGFYYSRPDKLDKCFYKYYGLNKLINLLIKEKPDLILLTFPTPVMSVLTEQFNINIPVATVMTDYRLHKNWITPYSTRYYVATKETKQDFIDVGIDPSTVKVTGIPIDNKFETPINQKQWLIDNNLDPDKQTILMSAGAFGVSKGFDTMITDILAKSANAQVVMICGKSKELKRSLTAKFKSNENVLILGYTKHMNEWMASSQLMITKPGGITITEGFARCIPMIFLNPAPGQELENALYFEEKGFGKIADTPEEAIKIVASLTNGNEQLTNMISTMEQDKIKYATQTICRDLLDLIGHSSQPQEIYGKVPLYARFFVK</sequence>
<name>UGTP_STAAW</name>
<evidence type="ECO:0000255" key="1">
    <source>
        <dbReference type="HAMAP-Rule" id="MF_01280"/>
    </source>
</evidence>